<reference key="1">
    <citation type="submission" date="1998-03" db="EMBL/GenBank/DDBJ databases">
        <title>Complete sequence of the citrate synthase gene of Salmonella typhimurium LT2.</title>
        <authorList>
            <person name="Horswill A.R."/>
            <person name="Dudding A.R."/>
            <person name="Escalante-Semerena J.C."/>
        </authorList>
    </citation>
    <scope>NUCLEOTIDE SEQUENCE [GENOMIC DNA]</scope>
    <source>
        <strain>LT2</strain>
    </source>
</reference>
<reference key="2">
    <citation type="journal article" date="2001" name="Nature">
        <title>Complete genome sequence of Salmonella enterica serovar Typhimurium LT2.</title>
        <authorList>
            <person name="McClelland M."/>
            <person name="Sanderson K.E."/>
            <person name="Spieth J."/>
            <person name="Clifton S.W."/>
            <person name="Latreille P."/>
            <person name="Courtney L."/>
            <person name="Porwollik S."/>
            <person name="Ali J."/>
            <person name="Dante M."/>
            <person name="Du F."/>
            <person name="Hou S."/>
            <person name="Layman D."/>
            <person name="Leonard S."/>
            <person name="Nguyen C."/>
            <person name="Scott K."/>
            <person name="Holmes A."/>
            <person name="Grewal N."/>
            <person name="Mulvaney E."/>
            <person name="Ryan E."/>
            <person name="Sun H."/>
            <person name="Florea L."/>
            <person name="Miller W."/>
            <person name="Stoneking T."/>
            <person name="Nhan M."/>
            <person name="Waterston R."/>
            <person name="Wilson R.K."/>
        </authorList>
    </citation>
    <scope>NUCLEOTIDE SEQUENCE [LARGE SCALE GENOMIC DNA]</scope>
    <source>
        <strain>LT2 / SGSC1412 / ATCC 700720</strain>
    </source>
</reference>
<evidence type="ECO:0000250" key="1"/>
<evidence type="ECO:0000255" key="2">
    <source>
        <dbReference type="PROSITE-ProRule" id="PRU10117"/>
    </source>
</evidence>
<evidence type="ECO:0000305" key="3"/>
<organism>
    <name type="scientific">Salmonella typhimurium (strain LT2 / SGSC1412 / ATCC 700720)</name>
    <dbReference type="NCBI Taxonomy" id="99287"/>
    <lineage>
        <taxon>Bacteria</taxon>
        <taxon>Pseudomonadati</taxon>
        <taxon>Pseudomonadota</taxon>
        <taxon>Gammaproteobacteria</taxon>
        <taxon>Enterobacterales</taxon>
        <taxon>Enterobacteriaceae</taxon>
        <taxon>Salmonella</taxon>
    </lineage>
</organism>
<sequence length="427" mass="48106">MADTKAKITLTGDTTIELDVLKGTLGQDVIDIRSLGSKGVFTFDPGFTSTASCESKITFIDGDEGILLHRGFPIDQLATDSNYLEVCYILLYGEKPTQEEYDEFRTTVTRHTMIHEQITRLFHAFRRDSHPMAVMCGITGALAAFYHDSLDVNNPRHREIAAFRLLSKMPTMAAMCYKYSIGQPFVYPRNDLSYAGNFLNMMFSTPCETYEVNPVLERAMDRILILHADHEQNASTSTVRTAGSSGANPFACIAAGIASLWGPAHGGANEAALKMLEEISSVKHIPEFVRRAKDKNDSFRLMGFGHRVYKNYDPRATVMRETCHEVLKELGTKDDLLEVAMELEHIALNDPYFIEKKLYPNVDFYSGIILKAMGIPSSMFTVIFAMARTVGWIAHWNEMHTDGMKIARPRQLYTGYDKRDFKSALKR</sequence>
<feature type="chain" id="PRO_0000169945" description="Citrate synthase">
    <location>
        <begin position="1"/>
        <end position="427"/>
    </location>
</feature>
<feature type="active site" evidence="2">
    <location>
        <position position="306"/>
    </location>
</feature>
<feature type="active site" evidence="2">
    <location>
        <position position="363"/>
    </location>
</feature>
<name>CISY_SALTY</name>
<comment type="catalytic activity">
    <reaction evidence="2">
        <text>oxaloacetate + acetyl-CoA + H2O = citrate + CoA + H(+)</text>
        <dbReference type="Rhea" id="RHEA:16845"/>
        <dbReference type="ChEBI" id="CHEBI:15377"/>
        <dbReference type="ChEBI" id="CHEBI:15378"/>
        <dbReference type="ChEBI" id="CHEBI:16452"/>
        <dbReference type="ChEBI" id="CHEBI:16947"/>
        <dbReference type="ChEBI" id="CHEBI:57287"/>
        <dbReference type="ChEBI" id="CHEBI:57288"/>
        <dbReference type="EC" id="2.3.3.16"/>
    </reaction>
</comment>
<comment type="activity regulation">
    <text evidence="1">Allosterically inhibited by NADH.</text>
</comment>
<comment type="pathway">
    <text>Carbohydrate metabolism; tricarboxylic acid cycle; isocitrate from oxaloacetate: step 1/2.</text>
</comment>
<comment type="subunit">
    <text evidence="1">Homohexamer.</text>
</comment>
<comment type="miscellaneous">
    <text>Citrate synthase is found in nearly all cells capable of oxidative metabolism.</text>
</comment>
<comment type="similarity">
    <text evidence="3">Belongs to the citrate synthase family.</text>
</comment>
<accession>O68883</accession>
<keyword id="KW-0021">Allosteric enzyme</keyword>
<keyword id="KW-1185">Reference proteome</keyword>
<keyword id="KW-0808">Transferase</keyword>
<keyword id="KW-0816">Tricarboxylic acid cycle</keyword>
<protein>
    <recommendedName>
        <fullName>Citrate synthase</fullName>
        <ecNumber>2.3.3.16</ecNumber>
    </recommendedName>
</protein>
<dbReference type="EC" id="2.3.3.16"/>
<dbReference type="EMBL" id="AF056043">
    <property type="protein sequence ID" value="AAC12779.1"/>
    <property type="molecule type" value="Genomic_DNA"/>
</dbReference>
<dbReference type="EMBL" id="AE006468">
    <property type="protein sequence ID" value="AAL19674.1"/>
    <property type="molecule type" value="Genomic_DNA"/>
</dbReference>
<dbReference type="RefSeq" id="NP_459715.1">
    <property type="nucleotide sequence ID" value="NC_003197.2"/>
</dbReference>
<dbReference type="RefSeq" id="WP_000785817.1">
    <property type="nucleotide sequence ID" value="NC_003197.2"/>
</dbReference>
<dbReference type="SMR" id="O68883"/>
<dbReference type="STRING" id="99287.STM0730"/>
<dbReference type="PaxDb" id="99287-STM0730"/>
<dbReference type="GeneID" id="1252250"/>
<dbReference type="KEGG" id="stm:STM0730"/>
<dbReference type="PATRIC" id="fig|99287.12.peg.762"/>
<dbReference type="HOGENOM" id="CLU_025068_0_0_6"/>
<dbReference type="PhylomeDB" id="O68883"/>
<dbReference type="BioCyc" id="SENT99287:STM0730-MONOMER"/>
<dbReference type="UniPathway" id="UPA00223">
    <property type="reaction ID" value="UER00717"/>
</dbReference>
<dbReference type="Proteomes" id="UP000001014">
    <property type="component" value="Chromosome"/>
</dbReference>
<dbReference type="GO" id="GO:0005737">
    <property type="term" value="C:cytoplasm"/>
    <property type="evidence" value="ECO:0007669"/>
    <property type="project" value="InterPro"/>
</dbReference>
<dbReference type="GO" id="GO:0004108">
    <property type="term" value="F:citrate (Si)-synthase activity"/>
    <property type="evidence" value="ECO:0007669"/>
    <property type="project" value="InterPro"/>
</dbReference>
<dbReference type="GO" id="GO:0006099">
    <property type="term" value="P:tricarboxylic acid cycle"/>
    <property type="evidence" value="ECO:0007669"/>
    <property type="project" value="UniProtKB-UniPathway"/>
</dbReference>
<dbReference type="CDD" id="cd06114">
    <property type="entry name" value="EcCS_like"/>
    <property type="match status" value="1"/>
</dbReference>
<dbReference type="FunFam" id="1.10.230.10:FF:000002">
    <property type="entry name" value="Citrate synthase"/>
    <property type="match status" value="1"/>
</dbReference>
<dbReference type="FunFam" id="1.10.580.10:FF:000002">
    <property type="entry name" value="Citrate synthase"/>
    <property type="match status" value="1"/>
</dbReference>
<dbReference type="FunFam" id="2.20.28.60:FF:000001">
    <property type="entry name" value="Citrate synthase"/>
    <property type="match status" value="1"/>
</dbReference>
<dbReference type="Gene3D" id="2.20.28.60">
    <property type="match status" value="1"/>
</dbReference>
<dbReference type="Gene3D" id="1.10.580.10">
    <property type="entry name" value="Citrate Synthase, domain 1"/>
    <property type="match status" value="1"/>
</dbReference>
<dbReference type="Gene3D" id="1.10.230.10">
    <property type="entry name" value="Cytochrome P450-Terp, domain 2"/>
    <property type="match status" value="1"/>
</dbReference>
<dbReference type="InterPro" id="IPR016142">
    <property type="entry name" value="Citrate_synth-like_lrg_a-sub"/>
</dbReference>
<dbReference type="InterPro" id="IPR016143">
    <property type="entry name" value="Citrate_synth-like_sm_a-sub"/>
</dbReference>
<dbReference type="InterPro" id="IPR002020">
    <property type="entry name" value="Citrate_synthase"/>
</dbReference>
<dbReference type="InterPro" id="IPR019810">
    <property type="entry name" value="Citrate_synthase_AS"/>
</dbReference>
<dbReference type="InterPro" id="IPR024176">
    <property type="entry name" value="Citrate_synthase_bac-typ"/>
</dbReference>
<dbReference type="InterPro" id="IPR036969">
    <property type="entry name" value="Citrate_synthase_sf"/>
</dbReference>
<dbReference type="InterPro" id="IPR010953">
    <property type="entry name" value="Citrate_synthase_typ-I"/>
</dbReference>
<dbReference type="NCBIfam" id="TIGR01798">
    <property type="entry name" value="cit_synth_I"/>
    <property type="match status" value="1"/>
</dbReference>
<dbReference type="NCBIfam" id="NF004126">
    <property type="entry name" value="PRK05614.1"/>
    <property type="match status" value="1"/>
</dbReference>
<dbReference type="PANTHER" id="PTHR42871">
    <property type="entry name" value="CITRATE SYNTHASE"/>
    <property type="match status" value="1"/>
</dbReference>
<dbReference type="PANTHER" id="PTHR42871:SF1">
    <property type="entry name" value="CITRATE SYNTHASE"/>
    <property type="match status" value="1"/>
</dbReference>
<dbReference type="Pfam" id="PF00285">
    <property type="entry name" value="Citrate_synt"/>
    <property type="match status" value="1"/>
</dbReference>
<dbReference type="PIRSF" id="PIRSF001369">
    <property type="entry name" value="Citrate_synth"/>
    <property type="match status" value="1"/>
</dbReference>
<dbReference type="PRINTS" id="PR00143">
    <property type="entry name" value="CITRTSNTHASE"/>
</dbReference>
<dbReference type="SUPFAM" id="SSF48256">
    <property type="entry name" value="Citrate synthase"/>
    <property type="match status" value="1"/>
</dbReference>
<dbReference type="PROSITE" id="PS00480">
    <property type="entry name" value="CITRATE_SYNTHASE"/>
    <property type="match status" value="1"/>
</dbReference>
<proteinExistence type="inferred from homology"/>
<gene>
    <name type="primary">gltA</name>
    <name type="ordered locus">STM0730</name>
</gene>